<sequence length="423" mass="46250">MNLLDYKSRPILSLTSIFAAWKSFLLAIALGASIGPDYDTSTSLFFAIVHGASSPRSLATRLTRWDALYFMHDAVKGKVYEQEWAFGIGMPAAVRSICGLLNLQRWEALVAIAISHVSHLVAVLALYQLTIVLCNDRKLAYLASVVHVLSPAGLFISAPYAESPFACMSFVGNLLYAISLKSSPDSLKRNLAVVGAGLSYGISCTLRSNGLFGGVLFAVETVKCLLALRNGFSISKILRLVAPLIGGILVAVGFVAPQVLAWMRYCNGNEEQRAWCGHRIPSIYTFVQAEYWDVGFLKYWTPNQIPLFLLAAPMLTILLKSGTETMREPSRGLGAVAMGTNEESRLLVRTLAAIQTLLAVLAITNYHVQIISRLSSGYPVWYWWVASCLMDKQRQSLGYGVIVFITMYAAIQGGLFASFLPPA</sequence>
<name>GPI18_GIBZE</name>
<accession>Q4I0K3</accession>
<accession>A0A0E0SFJ6</accession>
<accession>V6RP86</accession>
<comment type="function">
    <text evidence="1">Mannosyltransferase involved in glycosylphosphatidylinositol-anchor biosynthesis. Transfers the second mannose to the glycosylphosphatidylinositol during GPI precursor assembly (By similarity).</text>
</comment>
<comment type="pathway">
    <text>Glycolipid biosynthesis; glycosylphosphatidylinositol-anchor biosynthesis.</text>
</comment>
<comment type="subcellular location">
    <subcellularLocation>
        <location evidence="1">Endoplasmic reticulum membrane</location>
        <topology evidence="1">Multi-pass membrane protein</topology>
    </subcellularLocation>
</comment>
<comment type="similarity">
    <text evidence="3">Belongs to the PIGV family.</text>
</comment>
<feature type="chain" id="PRO_0000246247" description="GPI mannosyltransferase 2">
    <location>
        <begin position="1"/>
        <end position="423"/>
    </location>
</feature>
<feature type="transmembrane region" description="Helical" evidence="2">
    <location>
        <begin position="11"/>
        <end position="31"/>
    </location>
</feature>
<feature type="transmembrane region" description="Helical" evidence="2">
    <location>
        <begin position="106"/>
        <end position="126"/>
    </location>
</feature>
<feature type="transmembrane region" description="Helical" evidence="2">
    <location>
        <begin position="139"/>
        <end position="159"/>
    </location>
</feature>
<feature type="transmembrane region" description="Helical" evidence="2">
    <location>
        <begin position="160"/>
        <end position="180"/>
    </location>
</feature>
<feature type="transmembrane region" description="Helical" evidence="2">
    <location>
        <begin position="197"/>
        <end position="219"/>
    </location>
</feature>
<feature type="transmembrane region" description="Helical" evidence="2">
    <location>
        <begin position="240"/>
        <end position="260"/>
    </location>
</feature>
<feature type="transmembrane region" description="Helical" evidence="2">
    <location>
        <begin position="299"/>
        <end position="319"/>
    </location>
</feature>
<feature type="transmembrane region" description="Helical" evidence="2">
    <location>
        <begin position="351"/>
        <end position="371"/>
    </location>
</feature>
<feature type="transmembrane region" description="Helical" evidence="2">
    <location>
        <begin position="400"/>
        <end position="420"/>
    </location>
</feature>
<keyword id="KW-0256">Endoplasmic reticulum</keyword>
<keyword id="KW-0328">Glycosyltransferase</keyword>
<keyword id="KW-0337">GPI-anchor biosynthesis</keyword>
<keyword id="KW-0472">Membrane</keyword>
<keyword id="KW-1185">Reference proteome</keyword>
<keyword id="KW-0808">Transferase</keyword>
<keyword id="KW-0812">Transmembrane</keyword>
<keyword id="KW-1133">Transmembrane helix</keyword>
<protein>
    <recommendedName>
        <fullName>GPI mannosyltransferase 2</fullName>
        <ecNumber>2.4.1.-</ecNumber>
    </recommendedName>
    <alternativeName>
        <fullName>GPI mannosyltransferase II</fullName>
        <shortName>GPI-MT-II</shortName>
    </alternativeName>
    <alternativeName>
        <fullName>Glycosylphosphatidylinositol-anchor biosynthesis protein 18</fullName>
    </alternativeName>
</protein>
<evidence type="ECO:0000250" key="1"/>
<evidence type="ECO:0000255" key="2"/>
<evidence type="ECO:0000305" key="3"/>
<organism>
    <name type="scientific">Gibberella zeae (strain ATCC MYA-4620 / CBS 123657 / FGSC 9075 / NRRL 31084 / PH-1)</name>
    <name type="common">Wheat head blight fungus</name>
    <name type="synonym">Fusarium graminearum</name>
    <dbReference type="NCBI Taxonomy" id="229533"/>
    <lineage>
        <taxon>Eukaryota</taxon>
        <taxon>Fungi</taxon>
        <taxon>Dikarya</taxon>
        <taxon>Ascomycota</taxon>
        <taxon>Pezizomycotina</taxon>
        <taxon>Sordariomycetes</taxon>
        <taxon>Hypocreomycetidae</taxon>
        <taxon>Hypocreales</taxon>
        <taxon>Nectriaceae</taxon>
        <taxon>Fusarium</taxon>
    </lineage>
</organism>
<reference key="1">
    <citation type="journal article" date="2007" name="Science">
        <title>The Fusarium graminearum genome reveals a link between localized polymorphism and pathogen specialization.</title>
        <authorList>
            <person name="Cuomo C.A."/>
            <person name="Gueldener U."/>
            <person name="Xu J.-R."/>
            <person name="Trail F."/>
            <person name="Turgeon B.G."/>
            <person name="Di Pietro A."/>
            <person name="Walton J.D."/>
            <person name="Ma L.-J."/>
            <person name="Baker S.E."/>
            <person name="Rep M."/>
            <person name="Adam G."/>
            <person name="Antoniw J."/>
            <person name="Baldwin T."/>
            <person name="Calvo S.E."/>
            <person name="Chang Y.-L."/>
            <person name="DeCaprio D."/>
            <person name="Gale L.R."/>
            <person name="Gnerre S."/>
            <person name="Goswami R.S."/>
            <person name="Hammond-Kosack K."/>
            <person name="Harris L.J."/>
            <person name="Hilburn K."/>
            <person name="Kennell J.C."/>
            <person name="Kroken S."/>
            <person name="Magnuson J.K."/>
            <person name="Mannhaupt G."/>
            <person name="Mauceli E.W."/>
            <person name="Mewes H.-W."/>
            <person name="Mitterbauer R."/>
            <person name="Muehlbauer G."/>
            <person name="Muensterkoetter M."/>
            <person name="Nelson D."/>
            <person name="O'Donnell K."/>
            <person name="Ouellet T."/>
            <person name="Qi W."/>
            <person name="Quesneville H."/>
            <person name="Roncero M.I.G."/>
            <person name="Seong K.-Y."/>
            <person name="Tetko I.V."/>
            <person name="Urban M."/>
            <person name="Waalwijk C."/>
            <person name="Ward T.J."/>
            <person name="Yao J."/>
            <person name="Birren B.W."/>
            <person name="Kistler H.C."/>
        </authorList>
    </citation>
    <scope>NUCLEOTIDE SEQUENCE [LARGE SCALE GENOMIC DNA]</scope>
    <source>
        <strain>ATCC MYA-4620 / CBS 123657 / FGSC 9075 / NRRL 31084 / PH-1</strain>
    </source>
</reference>
<reference key="2">
    <citation type="journal article" date="2010" name="Nature">
        <title>Comparative genomics reveals mobile pathogenicity chromosomes in Fusarium.</title>
        <authorList>
            <person name="Ma L.-J."/>
            <person name="van der Does H.C."/>
            <person name="Borkovich K.A."/>
            <person name="Coleman J.J."/>
            <person name="Daboussi M.-J."/>
            <person name="Di Pietro A."/>
            <person name="Dufresne M."/>
            <person name="Freitag M."/>
            <person name="Grabherr M."/>
            <person name="Henrissat B."/>
            <person name="Houterman P.M."/>
            <person name="Kang S."/>
            <person name="Shim W.-B."/>
            <person name="Woloshuk C."/>
            <person name="Xie X."/>
            <person name="Xu J.-R."/>
            <person name="Antoniw J."/>
            <person name="Baker S.E."/>
            <person name="Bluhm B.H."/>
            <person name="Breakspear A."/>
            <person name="Brown D.W."/>
            <person name="Butchko R.A.E."/>
            <person name="Chapman S."/>
            <person name="Coulson R."/>
            <person name="Coutinho P.M."/>
            <person name="Danchin E.G.J."/>
            <person name="Diener A."/>
            <person name="Gale L.R."/>
            <person name="Gardiner D.M."/>
            <person name="Goff S."/>
            <person name="Hammond-Kosack K.E."/>
            <person name="Hilburn K."/>
            <person name="Hua-Van A."/>
            <person name="Jonkers W."/>
            <person name="Kazan K."/>
            <person name="Kodira C.D."/>
            <person name="Koehrsen M."/>
            <person name="Kumar L."/>
            <person name="Lee Y.-H."/>
            <person name="Li L."/>
            <person name="Manners J.M."/>
            <person name="Miranda-Saavedra D."/>
            <person name="Mukherjee M."/>
            <person name="Park G."/>
            <person name="Park J."/>
            <person name="Park S.-Y."/>
            <person name="Proctor R.H."/>
            <person name="Regev A."/>
            <person name="Ruiz-Roldan M.C."/>
            <person name="Sain D."/>
            <person name="Sakthikumar S."/>
            <person name="Sykes S."/>
            <person name="Schwartz D.C."/>
            <person name="Turgeon B.G."/>
            <person name="Wapinski I."/>
            <person name="Yoder O."/>
            <person name="Young S."/>
            <person name="Zeng Q."/>
            <person name="Zhou S."/>
            <person name="Galagan J."/>
            <person name="Cuomo C.A."/>
            <person name="Kistler H.C."/>
            <person name="Rep M."/>
        </authorList>
    </citation>
    <scope>GENOME REANNOTATION</scope>
    <source>
        <strain>ATCC MYA-4620 / CBS 123657 / FGSC 9075 / NRRL 31084 / PH-1</strain>
    </source>
</reference>
<reference key="3">
    <citation type="journal article" date="2015" name="BMC Genomics">
        <title>The completed genome sequence of the pathogenic ascomycete fungus Fusarium graminearum.</title>
        <authorList>
            <person name="King R."/>
            <person name="Urban M."/>
            <person name="Hammond-Kosack M.C.U."/>
            <person name="Hassani-Pak K."/>
            <person name="Hammond-Kosack K.E."/>
        </authorList>
    </citation>
    <scope>NUCLEOTIDE SEQUENCE [LARGE SCALE GENOMIC DNA]</scope>
    <source>
        <strain>ATCC MYA-4620 / CBS 123657 / FGSC 9075 / NRRL 31084 / PH-1</strain>
    </source>
</reference>
<proteinExistence type="inferred from homology"/>
<dbReference type="EC" id="2.4.1.-"/>
<dbReference type="EMBL" id="DS231668">
    <property type="protein sequence ID" value="ESU15802.1"/>
    <property type="molecule type" value="Genomic_DNA"/>
</dbReference>
<dbReference type="EMBL" id="HG970335">
    <property type="protein sequence ID" value="CEF85209.1"/>
    <property type="molecule type" value="Genomic_DNA"/>
</dbReference>
<dbReference type="RefSeq" id="XP_011328514.1">
    <property type="nucleotide sequence ID" value="XM_011330212.1"/>
</dbReference>
<dbReference type="FunCoup" id="Q4I0K3">
    <property type="interactions" value="294"/>
</dbReference>
<dbReference type="STRING" id="229533.Q4I0K3"/>
<dbReference type="CAZy" id="GT76">
    <property type="family name" value="Glycosyltransferase Family 76"/>
</dbReference>
<dbReference type="GeneID" id="23556217"/>
<dbReference type="KEGG" id="fgr:FGSG_09255"/>
<dbReference type="VEuPathDB" id="FungiDB:FGRAMPH1_01G27543"/>
<dbReference type="eggNOG" id="KOG2647">
    <property type="taxonomic scope" value="Eukaryota"/>
</dbReference>
<dbReference type="HOGENOM" id="CLU_029048_0_0_1"/>
<dbReference type="InParanoid" id="Q4I0K3"/>
<dbReference type="OrthoDB" id="87331at110618"/>
<dbReference type="UniPathway" id="UPA00196"/>
<dbReference type="Proteomes" id="UP000070720">
    <property type="component" value="Chromosome 4"/>
</dbReference>
<dbReference type="GO" id="GO:0005789">
    <property type="term" value="C:endoplasmic reticulum membrane"/>
    <property type="evidence" value="ECO:0007669"/>
    <property type="project" value="UniProtKB-SubCell"/>
</dbReference>
<dbReference type="GO" id="GO:0031501">
    <property type="term" value="C:mannosyltransferase complex"/>
    <property type="evidence" value="ECO:0007669"/>
    <property type="project" value="TreeGrafter"/>
</dbReference>
<dbReference type="GO" id="GO:0000009">
    <property type="term" value="F:alpha-1,6-mannosyltransferase activity"/>
    <property type="evidence" value="ECO:0007669"/>
    <property type="project" value="InterPro"/>
</dbReference>
<dbReference type="GO" id="GO:0004376">
    <property type="term" value="F:glycolipid mannosyltransferase activity"/>
    <property type="evidence" value="ECO:0007669"/>
    <property type="project" value="InterPro"/>
</dbReference>
<dbReference type="GO" id="GO:0006506">
    <property type="term" value="P:GPI anchor biosynthetic process"/>
    <property type="evidence" value="ECO:0007669"/>
    <property type="project" value="UniProtKB-UniPathway"/>
</dbReference>
<dbReference type="InterPro" id="IPR007315">
    <property type="entry name" value="PIG-V/Gpi18"/>
</dbReference>
<dbReference type="PANTHER" id="PTHR12468">
    <property type="entry name" value="GPI MANNOSYLTRANSFERASE 2"/>
    <property type="match status" value="1"/>
</dbReference>
<dbReference type="PANTHER" id="PTHR12468:SF2">
    <property type="entry name" value="GPI MANNOSYLTRANSFERASE 2"/>
    <property type="match status" value="1"/>
</dbReference>
<dbReference type="Pfam" id="PF04188">
    <property type="entry name" value="Mannosyl_trans2"/>
    <property type="match status" value="1"/>
</dbReference>
<gene>
    <name type="primary">GPI18</name>
    <name type="ORF">FGRRES_09255</name>
    <name type="ORF">FGSG_09255</name>
</gene>